<feature type="chain" id="PRO_0000336054" description="RUN domain-containing protein 3B">
    <location>
        <begin position="1"/>
        <end position="450"/>
    </location>
</feature>
<feature type="domain" description="RUN" evidence="2">
    <location>
        <begin position="48"/>
        <end position="180"/>
    </location>
</feature>
<feature type="region of interest" description="Disordered" evidence="3">
    <location>
        <begin position="203"/>
        <end position="225"/>
    </location>
</feature>
<feature type="coiled-coil region" evidence="1">
    <location>
        <begin position="291"/>
        <end position="317"/>
    </location>
</feature>
<protein>
    <recommendedName>
        <fullName>RUN domain-containing protein 3B</fullName>
    </recommendedName>
</protein>
<proteinExistence type="evidence at transcript level"/>
<accession>Q5U3W3</accession>
<dbReference type="EMBL" id="BC085369">
    <property type="protein sequence ID" value="AAH85369.1"/>
    <property type="molecule type" value="mRNA"/>
</dbReference>
<dbReference type="RefSeq" id="NP_001007417.1">
    <property type="nucleotide sequence ID" value="NM_001007416.1"/>
</dbReference>
<dbReference type="SMR" id="Q5U3W3"/>
<dbReference type="FunCoup" id="Q5U3W3">
    <property type="interactions" value="570"/>
</dbReference>
<dbReference type="STRING" id="7955.ENSDARP00000004018"/>
<dbReference type="PaxDb" id="7955-ENSDARP00000004018"/>
<dbReference type="GeneID" id="492775"/>
<dbReference type="KEGG" id="dre:492775"/>
<dbReference type="AGR" id="ZFIN:ZDB-GENE-041114-121"/>
<dbReference type="CTD" id="154661"/>
<dbReference type="ZFIN" id="ZDB-GENE-041114-121">
    <property type="gene designation" value="rundc3b"/>
</dbReference>
<dbReference type="eggNOG" id="KOG4381">
    <property type="taxonomic scope" value="Eukaryota"/>
</dbReference>
<dbReference type="InParanoid" id="Q5U3W3"/>
<dbReference type="OrthoDB" id="10029904at2759"/>
<dbReference type="PhylomeDB" id="Q5U3W3"/>
<dbReference type="PRO" id="PR:Q5U3W3"/>
<dbReference type="Proteomes" id="UP000000437">
    <property type="component" value="Chromosome 16"/>
</dbReference>
<dbReference type="CDD" id="cd17700">
    <property type="entry name" value="RUN_RUNDC3B"/>
    <property type="match status" value="1"/>
</dbReference>
<dbReference type="Gene3D" id="1.20.58.900">
    <property type="match status" value="1"/>
</dbReference>
<dbReference type="InterPro" id="IPR004012">
    <property type="entry name" value="Run_dom"/>
</dbReference>
<dbReference type="InterPro" id="IPR037213">
    <property type="entry name" value="Run_dom_sf"/>
</dbReference>
<dbReference type="InterPro" id="IPR047339">
    <property type="entry name" value="RUN_RUNDC3B"/>
</dbReference>
<dbReference type="InterPro" id="IPR047340">
    <property type="entry name" value="RUNDC3A_B"/>
</dbReference>
<dbReference type="PANTHER" id="PTHR46251">
    <property type="entry name" value="RUN DOMAIN-CONTAINING 3 PROTEIN RUNDC3"/>
    <property type="match status" value="1"/>
</dbReference>
<dbReference type="PANTHER" id="PTHR46251:SF1">
    <property type="entry name" value="RUN DOMAIN-CONTAINING PROTEIN 3B"/>
    <property type="match status" value="1"/>
</dbReference>
<dbReference type="Pfam" id="PF02759">
    <property type="entry name" value="RUN"/>
    <property type="match status" value="1"/>
</dbReference>
<dbReference type="SMART" id="SM00593">
    <property type="entry name" value="RUN"/>
    <property type="match status" value="1"/>
</dbReference>
<dbReference type="SUPFAM" id="SSF140741">
    <property type="entry name" value="RUN domain-like"/>
    <property type="match status" value="1"/>
</dbReference>
<dbReference type="PROSITE" id="PS50826">
    <property type="entry name" value="RUN"/>
    <property type="match status" value="1"/>
</dbReference>
<reference key="1">
    <citation type="submission" date="2004-11" db="EMBL/GenBank/DDBJ databases">
        <authorList>
            <consortium name="NIH - Zebrafish Gene Collection (ZGC) project"/>
        </authorList>
    </citation>
    <scope>NUCLEOTIDE SEQUENCE [LARGE SCALE MRNA]</scope>
    <source>
        <tissue>Embryo</tissue>
    </source>
</reference>
<gene>
    <name type="primary">rundc3b</name>
    <name type="ORF">zgc:101561</name>
</gene>
<organism>
    <name type="scientific">Danio rerio</name>
    <name type="common">Zebrafish</name>
    <name type="synonym">Brachydanio rerio</name>
    <dbReference type="NCBI Taxonomy" id="7955"/>
    <lineage>
        <taxon>Eukaryota</taxon>
        <taxon>Metazoa</taxon>
        <taxon>Chordata</taxon>
        <taxon>Craniata</taxon>
        <taxon>Vertebrata</taxon>
        <taxon>Euteleostomi</taxon>
        <taxon>Actinopterygii</taxon>
        <taxon>Neopterygii</taxon>
        <taxon>Teleostei</taxon>
        <taxon>Ostariophysi</taxon>
        <taxon>Cypriniformes</taxon>
        <taxon>Danionidae</taxon>
        <taxon>Danioninae</taxon>
        <taxon>Danio</taxon>
    </lineage>
</organism>
<evidence type="ECO:0000255" key="1"/>
<evidence type="ECO:0000255" key="2">
    <source>
        <dbReference type="PROSITE-ProRule" id="PRU00178"/>
    </source>
</evidence>
<evidence type="ECO:0000256" key="3">
    <source>
        <dbReference type="SAM" id="MobiDB-lite"/>
    </source>
</evidence>
<evidence type="ECO:0000305" key="4"/>
<sequence length="450" mass="50503">MASLNLGFSGARKKAAARIRAVERRNLITVCRFSVKTLIDRSCFETIDDTSAEFINFVSILEHILSHRLKGQVSWFGYESPRSFWDFIRMACSKVPHSCIHSIENMENVRSSRAKGRAWIRVALMEKRLSEYISAALRDFKTTRRFYEEGALLLGEEAGLLADTLIGLNAIDFSFCLKGEGLDEDCPVVIDYTPYLKFTQTSDSISSDEEEMRTLGSSGSEAGTPESHMAASLMADQSSWFSKSKRLEQKYRVVLEQRGYLEELVRLREAQLSESVSQNKALLQRLTDTEISHKLEKEQLEIIILELQDQLTVLKNHDLRSRQELTSHLTNQWPSPGALDGNAVALDTLLYRKRTGPWEEKSFPSLEQLSADMSLSQTSLDPVQLNTHSLDSKAGLAHWHREGKEDTPSLRGLCGSLTSMASYKSLASLKSSEYLASPTTDMTSPGLTPS</sequence>
<comment type="similarity">
    <text evidence="4">Belongs to the RUNDC3 family.</text>
</comment>
<name>RUN3B_DANRE</name>
<keyword id="KW-0175">Coiled coil</keyword>
<keyword id="KW-1185">Reference proteome</keyword>